<proteinExistence type="inferred from homology"/>
<comment type="catalytic activity">
    <reaction evidence="1">
        <text>(6S)-5,6,7,8-tetrahydrofolate + formate + ATP = (6R)-10-formyltetrahydrofolate + ADP + phosphate</text>
        <dbReference type="Rhea" id="RHEA:20221"/>
        <dbReference type="ChEBI" id="CHEBI:15740"/>
        <dbReference type="ChEBI" id="CHEBI:30616"/>
        <dbReference type="ChEBI" id="CHEBI:43474"/>
        <dbReference type="ChEBI" id="CHEBI:57453"/>
        <dbReference type="ChEBI" id="CHEBI:195366"/>
        <dbReference type="ChEBI" id="CHEBI:456216"/>
        <dbReference type="EC" id="6.3.4.3"/>
    </reaction>
</comment>
<comment type="pathway">
    <text evidence="1">One-carbon metabolism; tetrahydrofolate interconversion.</text>
</comment>
<comment type="similarity">
    <text evidence="1">Belongs to the formate--tetrahydrofolate ligase family.</text>
</comment>
<sequence length="553" mass="59599">MNDIEISQNAEMLPIQTIAKQAGFDEKVVEPYGHYKAKIDIFSEKPNTQLGKLVLVTSINPTPAGEGKSTVTVGLGDALNDLTGSAMIALREPSQGPVMGMKGGATGGGYSQVIPMDDINLHFTGDMHALTAANNTLAALIDNHLQQGNELNIDPRTIVWRRCLDINDRALRNIVIGLGGRFSGVPREDKFDITVASELMAILCLAQDLKDLKERINRILIANNYDGQPIFVKDLHVGGAIATLLKDAIKPNLVQTLGHTPAIIHGGPFANIAHGCNSVLATKTALRHAKYTVTEAGFGADLGAEKFLDIKTPVLGKQPDAIVIVATVRALKYNGGAKLADLKIEDVEALQKGYINLQRHIKNMQRYNIPVTVSINHFISDTDQEVNTLVKLIEAEGISAIVTDAWAKGGAGSKDLANEVIALADTNQGPMTKLYDNNGRIEDKIKTIVQKIYGGSDVEYSPQALKKIKECVANGWDHLPICMAKSQYSFSDDPKQLGAPSDFVMHVNDINIRLGAGFLVVQTGKVLTMPGLPKHPAALDIDIDSKGEITGLF</sequence>
<accession>Q03FM6</accession>
<feature type="chain" id="PRO_0000293051" description="Formate--tetrahydrofolate ligase">
    <location>
        <begin position="1"/>
        <end position="553"/>
    </location>
</feature>
<feature type="binding site" evidence="1">
    <location>
        <begin position="62"/>
        <end position="69"/>
    </location>
    <ligand>
        <name>ATP</name>
        <dbReference type="ChEBI" id="CHEBI:30616"/>
    </ligand>
</feature>
<dbReference type="EC" id="6.3.4.3" evidence="1"/>
<dbReference type="EMBL" id="CP000422">
    <property type="protein sequence ID" value="ABJ67996.1"/>
    <property type="molecule type" value="Genomic_DNA"/>
</dbReference>
<dbReference type="RefSeq" id="WP_011673357.1">
    <property type="nucleotide sequence ID" value="NC_008525.1"/>
</dbReference>
<dbReference type="SMR" id="Q03FM6"/>
<dbReference type="STRING" id="278197.PEPE_0939"/>
<dbReference type="GeneID" id="33062000"/>
<dbReference type="KEGG" id="ppe:PEPE_0939"/>
<dbReference type="eggNOG" id="COG2759">
    <property type="taxonomic scope" value="Bacteria"/>
</dbReference>
<dbReference type="HOGENOM" id="CLU_003601_3_3_9"/>
<dbReference type="OrthoDB" id="9761733at2"/>
<dbReference type="UniPathway" id="UPA00193"/>
<dbReference type="Proteomes" id="UP000000773">
    <property type="component" value="Chromosome"/>
</dbReference>
<dbReference type="GO" id="GO:0005524">
    <property type="term" value="F:ATP binding"/>
    <property type="evidence" value="ECO:0007669"/>
    <property type="project" value="UniProtKB-UniRule"/>
</dbReference>
<dbReference type="GO" id="GO:0004329">
    <property type="term" value="F:formate-tetrahydrofolate ligase activity"/>
    <property type="evidence" value="ECO:0007669"/>
    <property type="project" value="UniProtKB-UniRule"/>
</dbReference>
<dbReference type="GO" id="GO:0035999">
    <property type="term" value="P:tetrahydrofolate interconversion"/>
    <property type="evidence" value="ECO:0007669"/>
    <property type="project" value="UniProtKB-UniRule"/>
</dbReference>
<dbReference type="CDD" id="cd00477">
    <property type="entry name" value="FTHFS"/>
    <property type="match status" value="1"/>
</dbReference>
<dbReference type="FunFam" id="3.30.1510.10:FF:000001">
    <property type="entry name" value="Formate--tetrahydrofolate ligase"/>
    <property type="match status" value="1"/>
</dbReference>
<dbReference type="FunFam" id="3.10.410.10:FF:000001">
    <property type="entry name" value="Putative formate--tetrahydrofolate ligase"/>
    <property type="match status" value="1"/>
</dbReference>
<dbReference type="Gene3D" id="3.30.1510.10">
    <property type="entry name" value="Domain 2, N(10)-formyltetrahydrofolate synthetase"/>
    <property type="match status" value="1"/>
</dbReference>
<dbReference type="Gene3D" id="3.10.410.10">
    <property type="entry name" value="Formyltetrahydrofolate synthetase, domain 3"/>
    <property type="match status" value="1"/>
</dbReference>
<dbReference type="Gene3D" id="3.40.50.300">
    <property type="entry name" value="P-loop containing nucleotide triphosphate hydrolases"/>
    <property type="match status" value="1"/>
</dbReference>
<dbReference type="HAMAP" id="MF_01543">
    <property type="entry name" value="FTHFS"/>
    <property type="match status" value="1"/>
</dbReference>
<dbReference type="InterPro" id="IPR000559">
    <property type="entry name" value="Formate_THF_ligase"/>
</dbReference>
<dbReference type="InterPro" id="IPR020628">
    <property type="entry name" value="Formate_THF_ligase_CS"/>
</dbReference>
<dbReference type="InterPro" id="IPR027417">
    <property type="entry name" value="P-loop_NTPase"/>
</dbReference>
<dbReference type="NCBIfam" id="NF010030">
    <property type="entry name" value="PRK13505.1"/>
    <property type="match status" value="1"/>
</dbReference>
<dbReference type="Pfam" id="PF01268">
    <property type="entry name" value="FTHFS"/>
    <property type="match status" value="1"/>
</dbReference>
<dbReference type="SUPFAM" id="SSF52540">
    <property type="entry name" value="P-loop containing nucleoside triphosphate hydrolases"/>
    <property type="match status" value="1"/>
</dbReference>
<dbReference type="PROSITE" id="PS00721">
    <property type="entry name" value="FTHFS_1"/>
    <property type="match status" value="1"/>
</dbReference>
<dbReference type="PROSITE" id="PS00722">
    <property type="entry name" value="FTHFS_2"/>
    <property type="match status" value="1"/>
</dbReference>
<gene>
    <name evidence="1" type="primary">fhs</name>
    <name type="ordered locus">PEPE_0939</name>
</gene>
<protein>
    <recommendedName>
        <fullName evidence="1">Formate--tetrahydrofolate ligase</fullName>
        <ecNumber evidence="1">6.3.4.3</ecNumber>
    </recommendedName>
    <alternativeName>
        <fullName evidence="1">Formyltetrahydrofolate synthetase</fullName>
        <shortName evidence="1">FHS</shortName>
        <shortName evidence="1">FTHFS</shortName>
    </alternativeName>
</protein>
<name>FTHS_PEDPA</name>
<reference key="1">
    <citation type="journal article" date="2006" name="Proc. Natl. Acad. Sci. U.S.A.">
        <title>Comparative genomics of the lactic acid bacteria.</title>
        <authorList>
            <person name="Makarova K.S."/>
            <person name="Slesarev A."/>
            <person name="Wolf Y.I."/>
            <person name="Sorokin A."/>
            <person name="Mirkin B."/>
            <person name="Koonin E.V."/>
            <person name="Pavlov A."/>
            <person name="Pavlova N."/>
            <person name="Karamychev V."/>
            <person name="Polouchine N."/>
            <person name="Shakhova V."/>
            <person name="Grigoriev I."/>
            <person name="Lou Y."/>
            <person name="Rohksar D."/>
            <person name="Lucas S."/>
            <person name="Huang K."/>
            <person name="Goodstein D.M."/>
            <person name="Hawkins T."/>
            <person name="Plengvidhya V."/>
            <person name="Welker D."/>
            <person name="Hughes J."/>
            <person name="Goh Y."/>
            <person name="Benson A."/>
            <person name="Baldwin K."/>
            <person name="Lee J.-H."/>
            <person name="Diaz-Muniz I."/>
            <person name="Dosti B."/>
            <person name="Smeianov V."/>
            <person name="Wechter W."/>
            <person name="Barabote R."/>
            <person name="Lorca G."/>
            <person name="Altermann E."/>
            <person name="Barrangou R."/>
            <person name="Ganesan B."/>
            <person name="Xie Y."/>
            <person name="Rawsthorne H."/>
            <person name="Tamir D."/>
            <person name="Parker C."/>
            <person name="Breidt F."/>
            <person name="Broadbent J.R."/>
            <person name="Hutkins R."/>
            <person name="O'Sullivan D."/>
            <person name="Steele J."/>
            <person name="Unlu G."/>
            <person name="Saier M.H. Jr."/>
            <person name="Klaenhammer T."/>
            <person name="Richardson P."/>
            <person name="Kozyavkin S."/>
            <person name="Weimer B.C."/>
            <person name="Mills D.A."/>
        </authorList>
    </citation>
    <scope>NUCLEOTIDE SEQUENCE [LARGE SCALE GENOMIC DNA]</scope>
    <source>
        <strain>ATCC 25745 / CCUG 21536 / LMG 10740 / 183-1w</strain>
    </source>
</reference>
<evidence type="ECO:0000255" key="1">
    <source>
        <dbReference type="HAMAP-Rule" id="MF_01543"/>
    </source>
</evidence>
<keyword id="KW-0067">ATP-binding</keyword>
<keyword id="KW-0436">Ligase</keyword>
<keyword id="KW-0547">Nucleotide-binding</keyword>
<keyword id="KW-0554">One-carbon metabolism</keyword>
<organism>
    <name type="scientific">Pediococcus pentosaceus (strain ATCC 25745 / CCUG 21536 / LMG 10740 / 183-1w)</name>
    <dbReference type="NCBI Taxonomy" id="278197"/>
    <lineage>
        <taxon>Bacteria</taxon>
        <taxon>Bacillati</taxon>
        <taxon>Bacillota</taxon>
        <taxon>Bacilli</taxon>
        <taxon>Lactobacillales</taxon>
        <taxon>Lactobacillaceae</taxon>
        <taxon>Pediococcus</taxon>
    </lineage>
</organism>